<evidence type="ECO:0000255" key="1">
    <source>
        <dbReference type="HAMAP-Rule" id="MF_00323"/>
    </source>
</evidence>
<organism>
    <name type="scientific">Campylobacter jejuni subsp. jejuni serotype O:23/36 (strain 81-176)</name>
    <dbReference type="NCBI Taxonomy" id="354242"/>
    <lineage>
        <taxon>Bacteria</taxon>
        <taxon>Pseudomonadati</taxon>
        <taxon>Campylobacterota</taxon>
        <taxon>Epsilonproteobacteria</taxon>
        <taxon>Campylobacterales</taxon>
        <taxon>Campylobacteraceae</taxon>
        <taxon>Campylobacter</taxon>
    </lineage>
</organism>
<accession>A1VYL5</accession>
<comment type="function">
    <text evidence="1">Catalyzes the ferrous insertion into protoporphyrin IX.</text>
</comment>
<comment type="catalytic activity">
    <reaction evidence="1">
        <text>heme b + 2 H(+) = protoporphyrin IX + Fe(2+)</text>
        <dbReference type="Rhea" id="RHEA:22584"/>
        <dbReference type="ChEBI" id="CHEBI:15378"/>
        <dbReference type="ChEBI" id="CHEBI:29033"/>
        <dbReference type="ChEBI" id="CHEBI:57306"/>
        <dbReference type="ChEBI" id="CHEBI:60344"/>
        <dbReference type="EC" id="4.98.1.1"/>
    </reaction>
</comment>
<comment type="pathway">
    <text evidence="1">Porphyrin-containing compound metabolism; protoheme biosynthesis; protoheme from protoporphyrin-IX: step 1/1.</text>
</comment>
<comment type="subcellular location">
    <subcellularLocation>
        <location evidence="1">Cytoplasm</location>
    </subcellularLocation>
</comment>
<comment type="similarity">
    <text evidence="1">Belongs to the ferrochelatase family.</text>
</comment>
<name>HEMH_CAMJJ</name>
<protein>
    <recommendedName>
        <fullName evidence="1">Ferrochelatase</fullName>
        <ecNumber evidence="1">4.98.1.1</ecNumber>
    </recommendedName>
    <alternativeName>
        <fullName evidence="1">Heme synthase</fullName>
    </alternativeName>
    <alternativeName>
        <fullName evidence="1">Protoheme ferro-lyase</fullName>
    </alternativeName>
</protein>
<sequence length="309" mass="35767">MKLVLFLNMGGATNLQDCEVFLKNMFNDPYILGIKNRFLRKFVAWIITKARVKAMQENYKKMGGKSPLNELTQSLCNKLNLKQDEFKFDFVNLYVPPFATEILQKYTLNESDEIILFPLYPHHSCTTVTSSLEVLQNEISKQKIQAKVKTIDIFYKNELYNEMIVSHILDKKSKFDAKILIFSAHSLPQSIIDKGDLYEKHVNDHVEILKEKLKDHFDEFILAYQSKLGPVKWLEPNTSDVLANLNDKALIYPISFCIDCSETIFELGMEYKHLAKCDYDLISCPNDSDEFMEFILNSINSPLARKTSC</sequence>
<dbReference type="EC" id="4.98.1.1" evidence="1"/>
<dbReference type="EMBL" id="CP000538">
    <property type="protein sequence ID" value="EAQ73002.1"/>
    <property type="molecule type" value="Genomic_DNA"/>
</dbReference>
<dbReference type="RefSeq" id="WP_002869243.1">
    <property type="nucleotide sequence ID" value="NC_008787.1"/>
</dbReference>
<dbReference type="SMR" id="A1VYL5"/>
<dbReference type="KEGG" id="cjj:CJJ81176_0531"/>
<dbReference type="eggNOG" id="COG0276">
    <property type="taxonomic scope" value="Bacteria"/>
</dbReference>
<dbReference type="HOGENOM" id="CLU_018884_4_1_7"/>
<dbReference type="UniPathway" id="UPA00252">
    <property type="reaction ID" value="UER00325"/>
</dbReference>
<dbReference type="Proteomes" id="UP000000646">
    <property type="component" value="Chromosome"/>
</dbReference>
<dbReference type="GO" id="GO:0005737">
    <property type="term" value="C:cytoplasm"/>
    <property type="evidence" value="ECO:0007669"/>
    <property type="project" value="UniProtKB-SubCell"/>
</dbReference>
<dbReference type="GO" id="GO:0004325">
    <property type="term" value="F:ferrochelatase activity"/>
    <property type="evidence" value="ECO:0007669"/>
    <property type="project" value="UniProtKB-UniRule"/>
</dbReference>
<dbReference type="GO" id="GO:0046872">
    <property type="term" value="F:metal ion binding"/>
    <property type="evidence" value="ECO:0007669"/>
    <property type="project" value="UniProtKB-KW"/>
</dbReference>
<dbReference type="GO" id="GO:0006783">
    <property type="term" value="P:heme biosynthetic process"/>
    <property type="evidence" value="ECO:0007669"/>
    <property type="project" value="UniProtKB-UniRule"/>
</dbReference>
<dbReference type="CDD" id="cd00419">
    <property type="entry name" value="Ferrochelatase_C"/>
    <property type="match status" value="1"/>
</dbReference>
<dbReference type="CDD" id="cd03411">
    <property type="entry name" value="Ferrochelatase_N"/>
    <property type="match status" value="1"/>
</dbReference>
<dbReference type="Gene3D" id="3.40.50.1400">
    <property type="match status" value="2"/>
</dbReference>
<dbReference type="HAMAP" id="MF_00323">
    <property type="entry name" value="Ferrochelatase"/>
    <property type="match status" value="1"/>
</dbReference>
<dbReference type="InterPro" id="IPR001015">
    <property type="entry name" value="Ferrochelatase"/>
</dbReference>
<dbReference type="InterPro" id="IPR019772">
    <property type="entry name" value="Ferrochelatase_AS"/>
</dbReference>
<dbReference type="InterPro" id="IPR033644">
    <property type="entry name" value="Ferrochelatase_C"/>
</dbReference>
<dbReference type="InterPro" id="IPR033659">
    <property type="entry name" value="Ferrochelatase_N"/>
</dbReference>
<dbReference type="NCBIfam" id="TIGR00109">
    <property type="entry name" value="hemH"/>
    <property type="match status" value="1"/>
</dbReference>
<dbReference type="PANTHER" id="PTHR11108">
    <property type="entry name" value="FERROCHELATASE"/>
    <property type="match status" value="1"/>
</dbReference>
<dbReference type="PANTHER" id="PTHR11108:SF1">
    <property type="entry name" value="FERROCHELATASE, MITOCHONDRIAL"/>
    <property type="match status" value="1"/>
</dbReference>
<dbReference type="Pfam" id="PF00762">
    <property type="entry name" value="Ferrochelatase"/>
    <property type="match status" value="1"/>
</dbReference>
<dbReference type="SUPFAM" id="SSF53800">
    <property type="entry name" value="Chelatase"/>
    <property type="match status" value="1"/>
</dbReference>
<dbReference type="PROSITE" id="PS00534">
    <property type="entry name" value="FERROCHELATASE"/>
    <property type="match status" value="1"/>
</dbReference>
<proteinExistence type="inferred from homology"/>
<feature type="chain" id="PRO_1000019288" description="Ferrochelatase">
    <location>
        <begin position="1"/>
        <end position="309"/>
    </location>
</feature>
<feature type="binding site" evidence="1">
    <location>
        <position position="185"/>
    </location>
    <ligand>
        <name>Fe cation</name>
        <dbReference type="ChEBI" id="CHEBI:24875"/>
    </ligand>
</feature>
<feature type="binding site" evidence="1">
    <location>
        <position position="262"/>
    </location>
    <ligand>
        <name>Fe cation</name>
        <dbReference type="ChEBI" id="CHEBI:24875"/>
    </ligand>
</feature>
<gene>
    <name evidence="1" type="primary">hemH</name>
    <name type="ordered locus">CJJ81176_0531</name>
</gene>
<reference key="1">
    <citation type="submission" date="2006-12" db="EMBL/GenBank/DDBJ databases">
        <authorList>
            <person name="Fouts D.E."/>
            <person name="Nelson K.E."/>
            <person name="Sebastian Y."/>
        </authorList>
    </citation>
    <scope>NUCLEOTIDE SEQUENCE [LARGE SCALE GENOMIC DNA]</scope>
    <source>
        <strain>81-176</strain>
    </source>
</reference>
<keyword id="KW-0963">Cytoplasm</keyword>
<keyword id="KW-0350">Heme biosynthesis</keyword>
<keyword id="KW-0408">Iron</keyword>
<keyword id="KW-0456">Lyase</keyword>
<keyword id="KW-0479">Metal-binding</keyword>
<keyword id="KW-0627">Porphyrin biosynthesis</keyword>